<keyword id="KW-0133">Cell shape</keyword>
<keyword id="KW-0961">Cell wall biogenesis/degradation</keyword>
<keyword id="KW-0460">Magnesium</keyword>
<keyword id="KW-0479">Metal-binding</keyword>
<keyword id="KW-0573">Peptidoglycan synthesis</keyword>
<keyword id="KW-0808">Transferase</keyword>
<sequence length="238" mass="27335">MNHKLPQHIAVVMDGNGRWAESRGLPRVEGHKAGLDSVKKIINCCLEKKISCLSLFAFSSENWSRPVTEVNFLMELFLEALRKEIDDLNQHGIRLKFTGDREPLSQVLQKQMYDAEALTRNNQQLILNVVVNYGGKWDIVTAAKKLIHSVLDGKLACDEINEAVFAQFLDTSGMPEPDLFIRTSGELRISNFFLWQLAYTELYFTDVHWPDFNEHEFELALTSFARRARRFGQISQSE</sequence>
<evidence type="ECO:0000255" key="1">
    <source>
        <dbReference type="HAMAP-Rule" id="MF_01139"/>
    </source>
</evidence>
<proteinExistence type="inferred from homology"/>
<dbReference type="EC" id="2.5.1.31" evidence="1"/>
<dbReference type="EMBL" id="CR628336">
    <property type="protein sequence ID" value="CAH11714.1"/>
    <property type="molecule type" value="Genomic_DNA"/>
</dbReference>
<dbReference type="RefSeq" id="WP_011213132.1">
    <property type="nucleotide sequence ID" value="NC_006368.1"/>
</dbReference>
<dbReference type="SMR" id="Q5X7N9"/>
<dbReference type="KEGG" id="lpp:lpp0566"/>
<dbReference type="LegioList" id="lpp0566"/>
<dbReference type="HOGENOM" id="CLU_038505_1_1_6"/>
<dbReference type="GO" id="GO:0005829">
    <property type="term" value="C:cytosol"/>
    <property type="evidence" value="ECO:0007669"/>
    <property type="project" value="TreeGrafter"/>
</dbReference>
<dbReference type="GO" id="GO:0008834">
    <property type="term" value="F:ditrans,polycis-undecaprenyl-diphosphate synthase [(2E,6E)-farnesyl-diphosphate specific] activity"/>
    <property type="evidence" value="ECO:0007669"/>
    <property type="project" value="UniProtKB-UniRule"/>
</dbReference>
<dbReference type="GO" id="GO:0000287">
    <property type="term" value="F:magnesium ion binding"/>
    <property type="evidence" value="ECO:0007669"/>
    <property type="project" value="UniProtKB-UniRule"/>
</dbReference>
<dbReference type="GO" id="GO:0071555">
    <property type="term" value="P:cell wall organization"/>
    <property type="evidence" value="ECO:0007669"/>
    <property type="project" value="UniProtKB-KW"/>
</dbReference>
<dbReference type="GO" id="GO:0009252">
    <property type="term" value="P:peptidoglycan biosynthetic process"/>
    <property type="evidence" value="ECO:0007669"/>
    <property type="project" value="UniProtKB-UniRule"/>
</dbReference>
<dbReference type="GO" id="GO:0016094">
    <property type="term" value="P:polyprenol biosynthetic process"/>
    <property type="evidence" value="ECO:0007669"/>
    <property type="project" value="TreeGrafter"/>
</dbReference>
<dbReference type="GO" id="GO:0008360">
    <property type="term" value="P:regulation of cell shape"/>
    <property type="evidence" value="ECO:0007669"/>
    <property type="project" value="UniProtKB-KW"/>
</dbReference>
<dbReference type="CDD" id="cd00475">
    <property type="entry name" value="Cis_IPPS"/>
    <property type="match status" value="1"/>
</dbReference>
<dbReference type="FunFam" id="3.40.1180.10:FF:000001">
    <property type="entry name" value="(2E,6E)-farnesyl-diphosphate-specific ditrans,polycis-undecaprenyl-diphosphate synthase"/>
    <property type="match status" value="1"/>
</dbReference>
<dbReference type="Gene3D" id="3.40.1180.10">
    <property type="entry name" value="Decaprenyl diphosphate synthase-like"/>
    <property type="match status" value="1"/>
</dbReference>
<dbReference type="HAMAP" id="MF_01139">
    <property type="entry name" value="ISPT"/>
    <property type="match status" value="1"/>
</dbReference>
<dbReference type="InterPro" id="IPR001441">
    <property type="entry name" value="UPP_synth-like"/>
</dbReference>
<dbReference type="InterPro" id="IPR018520">
    <property type="entry name" value="UPP_synth-like_CS"/>
</dbReference>
<dbReference type="InterPro" id="IPR036424">
    <property type="entry name" value="UPP_synth-like_sf"/>
</dbReference>
<dbReference type="NCBIfam" id="NF011405">
    <property type="entry name" value="PRK14830.1"/>
    <property type="match status" value="1"/>
</dbReference>
<dbReference type="NCBIfam" id="TIGR00055">
    <property type="entry name" value="uppS"/>
    <property type="match status" value="1"/>
</dbReference>
<dbReference type="PANTHER" id="PTHR10291:SF0">
    <property type="entry name" value="DEHYDRODOLICHYL DIPHOSPHATE SYNTHASE 2"/>
    <property type="match status" value="1"/>
</dbReference>
<dbReference type="PANTHER" id="PTHR10291">
    <property type="entry name" value="DEHYDRODOLICHYL DIPHOSPHATE SYNTHASE FAMILY MEMBER"/>
    <property type="match status" value="1"/>
</dbReference>
<dbReference type="Pfam" id="PF01255">
    <property type="entry name" value="Prenyltransf"/>
    <property type="match status" value="1"/>
</dbReference>
<dbReference type="SUPFAM" id="SSF64005">
    <property type="entry name" value="Undecaprenyl diphosphate synthase"/>
    <property type="match status" value="1"/>
</dbReference>
<dbReference type="PROSITE" id="PS01066">
    <property type="entry name" value="UPP_SYNTHASE"/>
    <property type="match status" value="1"/>
</dbReference>
<name>UPPS_LEGPA</name>
<comment type="function">
    <text evidence="1">Catalyzes the sequential condensation of isopentenyl diphosphate (IPP) with (2E,6E)-farnesyl diphosphate (E,E-FPP) to yield (2Z,6Z,10Z,14Z,18Z,22Z,26Z,30Z,34E,38E)-undecaprenyl diphosphate (di-trans,octa-cis-UPP). UPP is the precursor of glycosyl carrier lipid in the biosynthesis of bacterial cell wall polysaccharide components such as peptidoglycan and lipopolysaccharide.</text>
</comment>
<comment type="catalytic activity">
    <reaction evidence="1">
        <text>8 isopentenyl diphosphate + (2E,6E)-farnesyl diphosphate = di-trans,octa-cis-undecaprenyl diphosphate + 8 diphosphate</text>
        <dbReference type="Rhea" id="RHEA:27551"/>
        <dbReference type="ChEBI" id="CHEBI:33019"/>
        <dbReference type="ChEBI" id="CHEBI:58405"/>
        <dbReference type="ChEBI" id="CHEBI:128769"/>
        <dbReference type="ChEBI" id="CHEBI:175763"/>
        <dbReference type="EC" id="2.5.1.31"/>
    </reaction>
</comment>
<comment type="cofactor">
    <cofactor evidence="1">
        <name>Mg(2+)</name>
        <dbReference type="ChEBI" id="CHEBI:18420"/>
    </cofactor>
    <text evidence="1">Binds 2 magnesium ions per subunit.</text>
</comment>
<comment type="subunit">
    <text evidence="1">Homodimer.</text>
</comment>
<comment type="similarity">
    <text evidence="1">Belongs to the UPP synthase family.</text>
</comment>
<feature type="chain" id="PRO_0000123629" description="Ditrans,polycis-undecaprenyl-diphosphate synthase ((2E,6E)-farnesyl-diphosphate specific)">
    <location>
        <begin position="1"/>
        <end position="238"/>
    </location>
</feature>
<feature type="active site" evidence="1">
    <location>
        <position position="14"/>
    </location>
</feature>
<feature type="active site" description="Proton acceptor" evidence="1">
    <location>
        <position position="62"/>
    </location>
</feature>
<feature type="binding site" evidence="1">
    <location>
        <position position="14"/>
    </location>
    <ligand>
        <name>Mg(2+)</name>
        <dbReference type="ChEBI" id="CHEBI:18420"/>
    </ligand>
</feature>
<feature type="binding site" evidence="1">
    <location>
        <begin position="15"/>
        <end position="18"/>
    </location>
    <ligand>
        <name>substrate</name>
    </ligand>
</feature>
<feature type="binding site" evidence="1">
    <location>
        <position position="19"/>
    </location>
    <ligand>
        <name>substrate</name>
    </ligand>
</feature>
<feature type="binding site" evidence="1">
    <location>
        <position position="27"/>
    </location>
    <ligand>
        <name>substrate</name>
    </ligand>
</feature>
<feature type="binding site" evidence="1">
    <location>
        <position position="31"/>
    </location>
    <ligand>
        <name>substrate</name>
    </ligand>
</feature>
<feature type="binding site" evidence="1">
    <location>
        <begin position="59"/>
        <end position="61"/>
    </location>
    <ligand>
        <name>substrate</name>
    </ligand>
</feature>
<feature type="binding site" evidence="1">
    <location>
        <position position="63"/>
    </location>
    <ligand>
        <name>substrate</name>
    </ligand>
</feature>
<feature type="binding site" evidence="1">
    <location>
        <position position="65"/>
    </location>
    <ligand>
        <name>substrate</name>
    </ligand>
</feature>
<feature type="binding site" evidence="1">
    <location>
        <position position="182"/>
    </location>
    <ligand>
        <name>substrate</name>
    </ligand>
</feature>
<feature type="binding site" evidence="1">
    <location>
        <begin position="188"/>
        <end position="190"/>
    </location>
    <ligand>
        <name>substrate</name>
    </ligand>
</feature>
<feature type="binding site" evidence="1">
    <location>
        <position position="201"/>
    </location>
    <ligand>
        <name>Mg(2+)</name>
        <dbReference type="ChEBI" id="CHEBI:18420"/>
    </ligand>
</feature>
<accession>Q5X7N9</accession>
<protein>
    <recommendedName>
        <fullName evidence="1">Ditrans,polycis-undecaprenyl-diphosphate synthase ((2E,6E)-farnesyl-diphosphate specific)</fullName>
        <ecNumber evidence="1">2.5.1.31</ecNumber>
    </recommendedName>
    <alternativeName>
        <fullName evidence="1">Ditrans,polycis-undecaprenylcistransferase</fullName>
    </alternativeName>
    <alternativeName>
        <fullName evidence="1">Undecaprenyl diphosphate synthase</fullName>
        <shortName evidence="1">UDS</shortName>
    </alternativeName>
    <alternativeName>
        <fullName evidence="1">Undecaprenyl pyrophosphate synthase</fullName>
        <shortName evidence="1">UPP synthase</shortName>
    </alternativeName>
</protein>
<reference key="1">
    <citation type="journal article" date="2004" name="Nat. Genet.">
        <title>Evidence in the Legionella pneumophila genome for exploitation of host cell functions and high genome plasticity.</title>
        <authorList>
            <person name="Cazalet C."/>
            <person name="Rusniok C."/>
            <person name="Brueggemann H."/>
            <person name="Zidane N."/>
            <person name="Magnier A."/>
            <person name="Ma L."/>
            <person name="Tichit M."/>
            <person name="Jarraud S."/>
            <person name="Bouchier C."/>
            <person name="Vandenesch F."/>
            <person name="Kunst F."/>
            <person name="Etienne J."/>
            <person name="Glaser P."/>
            <person name="Buchrieser C."/>
        </authorList>
    </citation>
    <scope>NUCLEOTIDE SEQUENCE [LARGE SCALE GENOMIC DNA]</scope>
    <source>
        <strain>Paris</strain>
    </source>
</reference>
<gene>
    <name evidence="1" type="primary">uppS</name>
    <name type="ordered locus">lpp0566</name>
</gene>
<organism>
    <name type="scientific">Legionella pneumophila (strain Paris)</name>
    <dbReference type="NCBI Taxonomy" id="297246"/>
    <lineage>
        <taxon>Bacteria</taxon>
        <taxon>Pseudomonadati</taxon>
        <taxon>Pseudomonadota</taxon>
        <taxon>Gammaproteobacteria</taxon>
        <taxon>Legionellales</taxon>
        <taxon>Legionellaceae</taxon>
        <taxon>Legionella</taxon>
    </lineage>
</organism>